<sequence length="106" mass="11329">MNRIYACPVADVPEGEALRIDTSPVIALFNVGGEFYAINDRCSHGNASMSEGYLEDDATVECPLHAASFCLKTGKALCLPATDPLTTYPVHVEGGDIFIDLPEAQP</sequence>
<protein>
    <recommendedName>
        <fullName>3-phenylpropionate/cinnamic acid dioxygenase ferredoxin subunit</fullName>
    </recommendedName>
</protein>
<proteinExistence type="inferred from homology"/>
<reference key="1">
    <citation type="journal article" date="2002" name="Nucleic Acids Res.">
        <title>Genome sequence of Shigella flexneri 2a: insights into pathogenicity through comparison with genomes of Escherichia coli K12 and O157.</title>
        <authorList>
            <person name="Jin Q."/>
            <person name="Yuan Z."/>
            <person name="Xu J."/>
            <person name="Wang Y."/>
            <person name="Shen Y."/>
            <person name="Lu W."/>
            <person name="Wang J."/>
            <person name="Liu H."/>
            <person name="Yang J."/>
            <person name="Yang F."/>
            <person name="Zhang X."/>
            <person name="Zhang J."/>
            <person name="Yang G."/>
            <person name="Wu H."/>
            <person name="Qu D."/>
            <person name="Dong J."/>
            <person name="Sun L."/>
            <person name="Xue Y."/>
            <person name="Zhao A."/>
            <person name="Gao Y."/>
            <person name="Zhu J."/>
            <person name="Kan B."/>
            <person name="Ding K."/>
            <person name="Chen S."/>
            <person name="Cheng H."/>
            <person name="Yao Z."/>
            <person name="He B."/>
            <person name="Chen R."/>
            <person name="Ma D."/>
            <person name="Qiang B."/>
            <person name="Wen Y."/>
            <person name="Hou Y."/>
            <person name="Yu J."/>
        </authorList>
    </citation>
    <scope>NUCLEOTIDE SEQUENCE [LARGE SCALE GENOMIC DNA]</scope>
    <source>
        <strain>301 / Serotype 2a</strain>
    </source>
</reference>
<reference key="2">
    <citation type="journal article" date="2003" name="Infect. Immun.">
        <title>Complete genome sequence and comparative genomics of Shigella flexneri serotype 2a strain 2457T.</title>
        <authorList>
            <person name="Wei J."/>
            <person name="Goldberg M.B."/>
            <person name="Burland V."/>
            <person name="Venkatesan M.M."/>
            <person name="Deng W."/>
            <person name="Fournier G."/>
            <person name="Mayhew G.F."/>
            <person name="Plunkett G. III"/>
            <person name="Rose D.J."/>
            <person name="Darling A."/>
            <person name="Mau B."/>
            <person name="Perna N.T."/>
            <person name="Payne S.M."/>
            <person name="Runyen-Janecky L.J."/>
            <person name="Zhou S."/>
            <person name="Schwartz D.C."/>
            <person name="Blattner F.R."/>
        </authorList>
    </citation>
    <scope>NUCLEOTIDE SEQUENCE [LARGE SCALE GENOMIC DNA]</scope>
    <source>
        <strain>ATCC 700930 / 2457T / Serotype 2a</strain>
    </source>
</reference>
<gene>
    <name type="primary">hcaC</name>
    <name type="ordered locus">SF2587</name>
    <name type="ordered locus">S2759</name>
</gene>
<keyword id="KW-0001">2Fe-2S</keyword>
<keyword id="KW-0058">Aromatic hydrocarbons catabolism</keyword>
<keyword id="KW-0249">Electron transport</keyword>
<keyword id="KW-0408">Iron</keyword>
<keyword id="KW-0411">Iron-sulfur</keyword>
<keyword id="KW-0479">Metal-binding</keyword>
<keyword id="KW-1185">Reference proteome</keyword>
<keyword id="KW-0813">Transport</keyword>
<name>HCAC_SHIFL</name>
<organism>
    <name type="scientific">Shigella flexneri</name>
    <dbReference type="NCBI Taxonomy" id="623"/>
    <lineage>
        <taxon>Bacteria</taxon>
        <taxon>Pseudomonadati</taxon>
        <taxon>Pseudomonadota</taxon>
        <taxon>Gammaproteobacteria</taxon>
        <taxon>Enterobacterales</taxon>
        <taxon>Enterobacteriaceae</taxon>
        <taxon>Shigella</taxon>
    </lineage>
</organism>
<feature type="chain" id="PRO_0000201690" description="3-phenylpropionate/cinnamic acid dioxygenase ferredoxin subunit">
    <location>
        <begin position="1"/>
        <end position="106"/>
    </location>
</feature>
<feature type="domain" description="Rieske">
    <location>
        <begin position="4"/>
        <end position="99"/>
    </location>
</feature>
<feature type="binding site" evidence="2">
    <location>
        <position position="42"/>
    </location>
    <ligand>
        <name>[2Fe-2S] cluster</name>
        <dbReference type="ChEBI" id="CHEBI:190135"/>
    </ligand>
</feature>
<feature type="binding site" evidence="2">
    <location>
        <position position="44"/>
    </location>
    <ligand>
        <name>[2Fe-2S] cluster</name>
        <dbReference type="ChEBI" id="CHEBI:190135"/>
    </ligand>
</feature>
<feature type="binding site" evidence="2">
    <location>
        <position position="62"/>
    </location>
    <ligand>
        <name>[2Fe-2S] cluster</name>
        <dbReference type="ChEBI" id="CHEBI:190135"/>
    </ligand>
</feature>
<feature type="binding site" evidence="2">
    <location>
        <position position="65"/>
    </location>
    <ligand>
        <name>[2Fe-2S] cluster</name>
        <dbReference type="ChEBI" id="CHEBI:190135"/>
    </ligand>
</feature>
<comment type="function">
    <text evidence="1">Part of the multicomponent 3-phenylpropionate dioxygenase, that converts 3-phenylpropionic acid (PP) and cinnamic acid (CI) into 3-phenylpropionate-dihydrodiol (PP-dihydrodiol) and cinnamic acid-dihydrodiol (CI-dihydrodiol), respectively. This protein seems to be a 2Fe-2S ferredoxin (By similarity).</text>
</comment>
<comment type="cofactor">
    <cofactor evidence="1">
        <name>[2Fe-2S] cluster</name>
        <dbReference type="ChEBI" id="CHEBI:190135"/>
    </cofactor>
    <text evidence="1">Binds 1 [2Fe-2S] cluster per subunit.</text>
</comment>
<comment type="pathway">
    <text>Aromatic compound metabolism; 3-phenylpropanoate degradation.</text>
</comment>
<comment type="subunit">
    <text evidence="1">This dioxygenase system consists of four proteins: the two subunits of the hydroxylase component (HcaE and HcaF), a ferredoxin (HcaC) and a ferredoxin reductase (HcaD).</text>
</comment>
<comment type="similarity">
    <text evidence="3">Belongs to the bacterial ring-hydroxylating dioxygenase ferredoxin component family.</text>
</comment>
<evidence type="ECO:0000250" key="1"/>
<evidence type="ECO:0000255" key="2"/>
<evidence type="ECO:0000305" key="3"/>
<accession>P0ABW2</accession>
<accession>O08099</accession>
<accession>P77266</accession>
<dbReference type="EMBL" id="AE005674">
    <property type="protein sequence ID" value="AAN44086.1"/>
    <property type="molecule type" value="Genomic_DNA"/>
</dbReference>
<dbReference type="EMBL" id="AE014073">
    <property type="protein sequence ID" value="AAP17911.1"/>
    <property type="molecule type" value="Genomic_DNA"/>
</dbReference>
<dbReference type="RefSeq" id="NP_708379.1">
    <property type="nucleotide sequence ID" value="NC_004337.2"/>
</dbReference>
<dbReference type="RefSeq" id="WP_001080102.1">
    <property type="nucleotide sequence ID" value="NZ_WPGW01000021.1"/>
</dbReference>
<dbReference type="SMR" id="P0ABW2"/>
<dbReference type="STRING" id="198214.SF2587"/>
<dbReference type="PaxDb" id="198214-SF2587"/>
<dbReference type="GeneID" id="1025644"/>
<dbReference type="KEGG" id="sfl:SF2587"/>
<dbReference type="KEGG" id="sfx:S2759"/>
<dbReference type="PATRIC" id="fig|198214.7.peg.3087"/>
<dbReference type="HOGENOM" id="CLU_055690_5_2_6"/>
<dbReference type="UniPathway" id="UPA00714"/>
<dbReference type="Proteomes" id="UP000001006">
    <property type="component" value="Chromosome"/>
</dbReference>
<dbReference type="Proteomes" id="UP000002673">
    <property type="component" value="Chromosome"/>
</dbReference>
<dbReference type="GO" id="GO:0051537">
    <property type="term" value="F:2 iron, 2 sulfur cluster binding"/>
    <property type="evidence" value="ECO:0007669"/>
    <property type="project" value="UniProtKB-KW"/>
</dbReference>
<dbReference type="GO" id="GO:0008695">
    <property type="term" value="F:3-phenylpropionate dioxygenase activity"/>
    <property type="evidence" value="ECO:0007669"/>
    <property type="project" value="UniProtKB-UniRule"/>
</dbReference>
<dbReference type="GO" id="GO:0046872">
    <property type="term" value="F:metal ion binding"/>
    <property type="evidence" value="ECO:0007669"/>
    <property type="project" value="UniProtKB-KW"/>
</dbReference>
<dbReference type="GO" id="GO:0019380">
    <property type="term" value="P:3-phenylpropionate catabolic process"/>
    <property type="evidence" value="ECO:0007669"/>
    <property type="project" value="UniProtKB-UniRule"/>
</dbReference>
<dbReference type="CDD" id="cd03528">
    <property type="entry name" value="Rieske_RO_ferredoxin"/>
    <property type="match status" value="1"/>
</dbReference>
<dbReference type="FunFam" id="2.102.10.10:FF:000005">
    <property type="entry name" value="3-phenylpropionate/cinnamic acid dioxygenase ferredoxin subunit"/>
    <property type="match status" value="1"/>
</dbReference>
<dbReference type="Gene3D" id="2.102.10.10">
    <property type="entry name" value="Rieske [2Fe-2S] iron-sulphur domain"/>
    <property type="match status" value="1"/>
</dbReference>
<dbReference type="HAMAP" id="MF_01650">
    <property type="entry name" value="HcaC"/>
    <property type="match status" value="1"/>
</dbReference>
<dbReference type="InterPro" id="IPR023739">
    <property type="entry name" value="HcaC"/>
</dbReference>
<dbReference type="InterPro" id="IPR017941">
    <property type="entry name" value="Rieske_2Fe-2S"/>
</dbReference>
<dbReference type="InterPro" id="IPR036922">
    <property type="entry name" value="Rieske_2Fe-2S_sf"/>
</dbReference>
<dbReference type="InterPro" id="IPR053387">
    <property type="entry name" value="Ring-hydroxylating_fd"/>
</dbReference>
<dbReference type="NCBIfam" id="NF042948">
    <property type="entry name" value="3PPDioc_HcaC"/>
    <property type="match status" value="1"/>
</dbReference>
<dbReference type="NCBIfam" id="NF007422">
    <property type="entry name" value="PRK09965.1"/>
    <property type="match status" value="1"/>
</dbReference>
<dbReference type="PANTHER" id="PTHR21496:SF23">
    <property type="entry name" value="3-PHENYLPROPIONATE_CINNAMIC ACID DIOXYGENASE FERREDOXIN SUBUNIT"/>
    <property type="match status" value="1"/>
</dbReference>
<dbReference type="PANTHER" id="PTHR21496">
    <property type="entry name" value="FERREDOXIN-RELATED"/>
    <property type="match status" value="1"/>
</dbReference>
<dbReference type="Pfam" id="PF00355">
    <property type="entry name" value="Rieske"/>
    <property type="match status" value="1"/>
</dbReference>
<dbReference type="SUPFAM" id="SSF50022">
    <property type="entry name" value="ISP domain"/>
    <property type="match status" value="1"/>
</dbReference>
<dbReference type="PROSITE" id="PS51296">
    <property type="entry name" value="RIESKE"/>
    <property type="match status" value="1"/>
</dbReference>